<name>DEOB_CLOK5</name>
<proteinExistence type="inferred from homology"/>
<organism>
    <name type="scientific">Clostridium kluyveri (strain ATCC 8527 / DSM 555 / NBRC 12016 / NCIMB 10680 / K1)</name>
    <dbReference type="NCBI Taxonomy" id="431943"/>
    <lineage>
        <taxon>Bacteria</taxon>
        <taxon>Bacillati</taxon>
        <taxon>Bacillota</taxon>
        <taxon>Clostridia</taxon>
        <taxon>Eubacteriales</taxon>
        <taxon>Clostridiaceae</taxon>
        <taxon>Clostridium</taxon>
    </lineage>
</organism>
<feature type="chain" id="PRO_1000083435" description="Phosphopentomutase">
    <location>
        <begin position="1"/>
        <end position="389"/>
    </location>
</feature>
<feature type="binding site" evidence="1">
    <location>
        <position position="10"/>
    </location>
    <ligand>
        <name>Mn(2+)</name>
        <dbReference type="ChEBI" id="CHEBI:29035"/>
        <label>1</label>
    </ligand>
</feature>
<feature type="binding site" evidence="1">
    <location>
        <position position="282"/>
    </location>
    <ligand>
        <name>Mn(2+)</name>
        <dbReference type="ChEBI" id="CHEBI:29035"/>
        <label>2</label>
    </ligand>
</feature>
<feature type="binding site" evidence="1">
    <location>
        <position position="287"/>
    </location>
    <ligand>
        <name>Mn(2+)</name>
        <dbReference type="ChEBI" id="CHEBI:29035"/>
        <label>2</label>
    </ligand>
</feature>
<feature type="binding site" evidence="1">
    <location>
        <position position="323"/>
    </location>
    <ligand>
        <name>Mn(2+)</name>
        <dbReference type="ChEBI" id="CHEBI:29035"/>
        <label>1</label>
    </ligand>
</feature>
<feature type="binding site" evidence="1">
    <location>
        <position position="324"/>
    </location>
    <ligand>
        <name>Mn(2+)</name>
        <dbReference type="ChEBI" id="CHEBI:29035"/>
        <label>1</label>
    </ligand>
</feature>
<feature type="binding site" evidence="1">
    <location>
        <position position="335"/>
    </location>
    <ligand>
        <name>Mn(2+)</name>
        <dbReference type="ChEBI" id="CHEBI:29035"/>
        <label>2</label>
    </ligand>
</feature>
<evidence type="ECO:0000255" key="1">
    <source>
        <dbReference type="HAMAP-Rule" id="MF_00740"/>
    </source>
</evidence>
<reference key="1">
    <citation type="journal article" date="2008" name="Proc. Natl. Acad. Sci. U.S.A.">
        <title>The genome of Clostridium kluyveri, a strict anaerobe with unique metabolic features.</title>
        <authorList>
            <person name="Seedorf H."/>
            <person name="Fricke W.F."/>
            <person name="Veith B."/>
            <person name="Brueggemann H."/>
            <person name="Liesegang H."/>
            <person name="Strittmatter A."/>
            <person name="Miethke M."/>
            <person name="Buckel W."/>
            <person name="Hinderberger J."/>
            <person name="Li F."/>
            <person name="Hagemeier C."/>
            <person name="Thauer R.K."/>
            <person name="Gottschalk G."/>
        </authorList>
    </citation>
    <scope>NUCLEOTIDE SEQUENCE [LARGE SCALE GENOMIC DNA]</scope>
    <source>
        <strain>ATCC 8527 / DSM 555 / NBRC 12016 / NCIMB 10680 / K1</strain>
    </source>
</reference>
<dbReference type="EC" id="5.4.2.7" evidence="1"/>
<dbReference type="EMBL" id="CP000673">
    <property type="protein sequence ID" value="EDK33284.1"/>
    <property type="molecule type" value="Genomic_DNA"/>
</dbReference>
<dbReference type="RefSeq" id="WP_012101628.1">
    <property type="nucleotide sequence ID" value="NC_009706.1"/>
</dbReference>
<dbReference type="SMR" id="A5N7K3"/>
<dbReference type="STRING" id="431943.CKL_1242"/>
<dbReference type="KEGG" id="ckl:CKL_1242"/>
<dbReference type="eggNOG" id="COG1015">
    <property type="taxonomic scope" value="Bacteria"/>
</dbReference>
<dbReference type="HOGENOM" id="CLU_053861_0_0_9"/>
<dbReference type="UniPathway" id="UPA00002">
    <property type="reaction ID" value="UER00467"/>
</dbReference>
<dbReference type="Proteomes" id="UP000002411">
    <property type="component" value="Chromosome"/>
</dbReference>
<dbReference type="GO" id="GO:0005829">
    <property type="term" value="C:cytosol"/>
    <property type="evidence" value="ECO:0007669"/>
    <property type="project" value="TreeGrafter"/>
</dbReference>
<dbReference type="GO" id="GO:0000287">
    <property type="term" value="F:magnesium ion binding"/>
    <property type="evidence" value="ECO:0007669"/>
    <property type="project" value="InterPro"/>
</dbReference>
<dbReference type="GO" id="GO:0030145">
    <property type="term" value="F:manganese ion binding"/>
    <property type="evidence" value="ECO:0007669"/>
    <property type="project" value="UniProtKB-UniRule"/>
</dbReference>
<dbReference type="GO" id="GO:0008973">
    <property type="term" value="F:phosphopentomutase activity"/>
    <property type="evidence" value="ECO:0007669"/>
    <property type="project" value="UniProtKB-UniRule"/>
</dbReference>
<dbReference type="GO" id="GO:0006018">
    <property type="term" value="P:2-deoxyribose 1-phosphate catabolic process"/>
    <property type="evidence" value="ECO:0007669"/>
    <property type="project" value="UniProtKB-UniRule"/>
</dbReference>
<dbReference type="GO" id="GO:0006015">
    <property type="term" value="P:5-phosphoribose 1-diphosphate biosynthetic process"/>
    <property type="evidence" value="ECO:0007669"/>
    <property type="project" value="UniProtKB-UniPathway"/>
</dbReference>
<dbReference type="GO" id="GO:0043094">
    <property type="term" value="P:metabolic compound salvage"/>
    <property type="evidence" value="ECO:0007669"/>
    <property type="project" value="InterPro"/>
</dbReference>
<dbReference type="GO" id="GO:0009117">
    <property type="term" value="P:nucleotide metabolic process"/>
    <property type="evidence" value="ECO:0007669"/>
    <property type="project" value="InterPro"/>
</dbReference>
<dbReference type="CDD" id="cd16009">
    <property type="entry name" value="PPM"/>
    <property type="match status" value="1"/>
</dbReference>
<dbReference type="FunFam" id="3.30.70.1250:FF:000001">
    <property type="entry name" value="Phosphopentomutase"/>
    <property type="match status" value="1"/>
</dbReference>
<dbReference type="Gene3D" id="3.40.720.10">
    <property type="entry name" value="Alkaline Phosphatase, subunit A"/>
    <property type="match status" value="1"/>
</dbReference>
<dbReference type="Gene3D" id="3.30.70.1250">
    <property type="entry name" value="Phosphopentomutase"/>
    <property type="match status" value="1"/>
</dbReference>
<dbReference type="HAMAP" id="MF_00740">
    <property type="entry name" value="Phosphopentomut"/>
    <property type="match status" value="1"/>
</dbReference>
<dbReference type="InterPro" id="IPR017850">
    <property type="entry name" value="Alkaline_phosphatase_core_sf"/>
</dbReference>
<dbReference type="InterPro" id="IPR010045">
    <property type="entry name" value="DeoB"/>
</dbReference>
<dbReference type="InterPro" id="IPR006124">
    <property type="entry name" value="Metalloenzyme"/>
</dbReference>
<dbReference type="InterPro" id="IPR024052">
    <property type="entry name" value="Phosphopentomutase_DeoB_cap_sf"/>
</dbReference>
<dbReference type="NCBIfam" id="TIGR01696">
    <property type="entry name" value="deoB"/>
    <property type="match status" value="1"/>
</dbReference>
<dbReference type="NCBIfam" id="NF003766">
    <property type="entry name" value="PRK05362.1"/>
    <property type="match status" value="1"/>
</dbReference>
<dbReference type="PANTHER" id="PTHR21110">
    <property type="entry name" value="PHOSPHOPENTOMUTASE"/>
    <property type="match status" value="1"/>
</dbReference>
<dbReference type="PANTHER" id="PTHR21110:SF0">
    <property type="entry name" value="PHOSPHOPENTOMUTASE"/>
    <property type="match status" value="1"/>
</dbReference>
<dbReference type="Pfam" id="PF01676">
    <property type="entry name" value="Metalloenzyme"/>
    <property type="match status" value="1"/>
</dbReference>
<dbReference type="PIRSF" id="PIRSF001491">
    <property type="entry name" value="Ppentomutase"/>
    <property type="match status" value="1"/>
</dbReference>
<dbReference type="SUPFAM" id="SSF53649">
    <property type="entry name" value="Alkaline phosphatase-like"/>
    <property type="match status" value="1"/>
</dbReference>
<dbReference type="SUPFAM" id="SSF143856">
    <property type="entry name" value="DeoB insert domain-like"/>
    <property type="match status" value="1"/>
</dbReference>
<gene>
    <name evidence="1" type="primary">deoB</name>
    <name type="ordered locus">CKL_1242</name>
</gene>
<accession>A5N7K3</accession>
<sequence>MERVILIVFDSVGIGELPDAKEYGDVGSNTLGNISKAAGGLEIPTLYKLGIGNIQGVENLRRCEKPIGSFGKCAELSKGKDTVTGHWEMAGIVLKTPLNTYPQGFPEDIIEEFQVKIGRKVLGNKVASGTEIINELGKEHVDTGYPIVYTSADSVFQVAAHEKIIPVEELYKMCKIAREMLLGDRTVGRVIARPFIYDKGKYVRTSNRKDFALDPPGKTMLDYIKEVGLDVMAVGKIEDIYNKRGITEAVHIKNNMDGIDKTLGYMKKNKSGLIFANLVDFDMLYGHRNDTEGYAKALVEADKRIPEIISNMNEEDVLIITADHGCDPTTKSTDHSREYIPVLVYGKNLKAGVDIGIRKSYSDIGKTILELLDIKNNLQGIGFKDLINK</sequence>
<comment type="function">
    <text evidence="1">Isomerase that catalyzes the conversion of deoxy-ribose 1-phosphate (dRib-1-P) and ribose 1-phosphate (Rib-1-P) to deoxy-ribose 5-phosphate (dRib-5-P) and ribose 5-phosphate (Rib-5-P), respectively.</text>
</comment>
<comment type="catalytic activity">
    <reaction evidence="1">
        <text>2-deoxy-alpha-D-ribose 1-phosphate = 2-deoxy-D-ribose 5-phosphate</text>
        <dbReference type="Rhea" id="RHEA:27658"/>
        <dbReference type="ChEBI" id="CHEBI:57259"/>
        <dbReference type="ChEBI" id="CHEBI:62877"/>
        <dbReference type="EC" id="5.4.2.7"/>
    </reaction>
</comment>
<comment type="catalytic activity">
    <reaction evidence="1">
        <text>alpha-D-ribose 1-phosphate = D-ribose 5-phosphate</text>
        <dbReference type="Rhea" id="RHEA:18793"/>
        <dbReference type="ChEBI" id="CHEBI:57720"/>
        <dbReference type="ChEBI" id="CHEBI:78346"/>
        <dbReference type="EC" id="5.4.2.7"/>
    </reaction>
</comment>
<comment type="cofactor">
    <cofactor evidence="1">
        <name>Mn(2+)</name>
        <dbReference type="ChEBI" id="CHEBI:29035"/>
    </cofactor>
    <text evidence="1">Binds 2 manganese ions.</text>
</comment>
<comment type="pathway">
    <text evidence="1">Carbohydrate degradation; 2-deoxy-D-ribose 1-phosphate degradation; D-glyceraldehyde 3-phosphate and acetaldehyde from 2-deoxy-alpha-D-ribose 1-phosphate: step 1/2.</text>
</comment>
<comment type="subcellular location">
    <subcellularLocation>
        <location evidence="1">Cytoplasm</location>
    </subcellularLocation>
</comment>
<comment type="similarity">
    <text evidence="1">Belongs to the phosphopentomutase family.</text>
</comment>
<keyword id="KW-0963">Cytoplasm</keyword>
<keyword id="KW-0413">Isomerase</keyword>
<keyword id="KW-0464">Manganese</keyword>
<keyword id="KW-0479">Metal-binding</keyword>
<keyword id="KW-1185">Reference proteome</keyword>
<protein>
    <recommendedName>
        <fullName evidence="1">Phosphopentomutase</fullName>
        <ecNumber evidence="1">5.4.2.7</ecNumber>
    </recommendedName>
    <alternativeName>
        <fullName evidence="1">Phosphodeoxyribomutase</fullName>
    </alternativeName>
</protein>